<reference key="1">
    <citation type="journal article" date="2003" name="J. Bacteriol.">
        <title>Complete genome sequence of the ammonia-oxidizing bacterium and obligate chemolithoautotroph Nitrosomonas europaea.</title>
        <authorList>
            <person name="Chain P."/>
            <person name="Lamerdin J.E."/>
            <person name="Larimer F.W."/>
            <person name="Regala W."/>
            <person name="Lao V."/>
            <person name="Land M.L."/>
            <person name="Hauser L."/>
            <person name="Hooper A.B."/>
            <person name="Klotz M.G."/>
            <person name="Norton J."/>
            <person name="Sayavedra-Soto L.A."/>
            <person name="Arciero D.M."/>
            <person name="Hommes N.G."/>
            <person name="Whittaker M.M."/>
            <person name="Arp D.J."/>
        </authorList>
    </citation>
    <scope>NUCLEOTIDE SEQUENCE [LARGE SCALE GENOMIC DNA]</scope>
    <source>
        <strain>ATCC 19718 / CIP 103999 / KCTC 2705 / NBRC 14298</strain>
    </source>
</reference>
<sequence>MLNTMLGNYFPILLFILVGLAIGVLSMLAGWLLAPNKPDAEKLSPYECGFGAFEDARMKFDVRYYLIAILFILFDLEIAFLFPWAVVLKEIGWFGFVAMLVFLGLLVVGFIYEWVKGALEWD</sequence>
<name>NUOA_NITEU</name>
<protein>
    <recommendedName>
        <fullName evidence="1">NADH-quinone oxidoreductase subunit A</fullName>
        <ecNumber evidence="1">7.1.1.-</ecNumber>
    </recommendedName>
    <alternativeName>
        <fullName evidence="1">NADH dehydrogenase I subunit A</fullName>
    </alternativeName>
    <alternativeName>
        <fullName evidence="1">NDH-1 subunit A</fullName>
    </alternativeName>
    <alternativeName>
        <fullName evidence="1">NUO1</fullName>
    </alternativeName>
</protein>
<organism>
    <name type="scientific">Nitrosomonas europaea (strain ATCC 19718 / CIP 103999 / KCTC 2705 / NBRC 14298)</name>
    <dbReference type="NCBI Taxonomy" id="228410"/>
    <lineage>
        <taxon>Bacteria</taxon>
        <taxon>Pseudomonadati</taxon>
        <taxon>Pseudomonadota</taxon>
        <taxon>Betaproteobacteria</taxon>
        <taxon>Nitrosomonadales</taxon>
        <taxon>Nitrosomonadaceae</taxon>
        <taxon>Nitrosomonas</taxon>
    </lineage>
</organism>
<evidence type="ECO:0000255" key="1">
    <source>
        <dbReference type="HAMAP-Rule" id="MF_01394"/>
    </source>
</evidence>
<gene>
    <name evidence="1" type="primary">nuoA</name>
    <name type="ordered locus">NE1777</name>
</gene>
<accession>Q82TU3</accession>
<keyword id="KW-0997">Cell inner membrane</keyword>
<keyword id="KW-1003">Cell membrane</keyword>
<keyword id="KW-0472">Membrane</keyword>
<keyword id="KW-0520">NAD</keyword>
<keyword id="KW-0874">Quinone</keyword>
<keyword id="KW-1185">Reference proteome</keyword>
<keyword id="KW-1278">Translocase</keyword>
<keyword id="KW-0812">Transmembrane</keyword>
<keyword id="KW-1133">Transmembrane helix</keyword>
<keyword id="KW-0813">Transport</keyword>
<keyword id="KW-0830">Ubiquinone</keyword>
<comment type="function">
    <text evidence="1">NDH-1 shuttles electrons from NADH, via FMN and iron-sulfur (Fe-S) centers, to quinones in the respiratory chain. The immediate electron acceptor for the enzyme in this species is believed to be ubiquinone. Couples the redox reaction to proton translocation (for every two electrons transferred, four hydrogen ions are translocated across the cytoplasmic membrane), and thus conserves the redox energy in a proton gradient.</text>
</comment>
<comment type="catalytic activity">
    <reaction evidence="1">
        <text>a quinone + NADH + 5 H(+)(in) = a quinol + NAD(+) + 4 H(+)(out)</text>
        <dbReference type="Rhea" id="RHEA:57888"/>
        <dbReference type="ChEBI" id="CHEBI:15378"/>
        <dbReference type="ChEBI" id="CHEBI:24646"/>
        <dbReference type="ChEBI" id="CHEBI:57540"/>
        <dbReference type="ChEBI" id="CHEBI:57945"/>
        <dbReference type="ChEBI" id="CHEBI:132124"/>
    </reaction>
</comment>
<comment type="subunit">
    <text evidence="1">NDH-1 is composed of 14 different subunits. Subunits NuoA, H, J, K, L, M, N constitute the membrane sector of the complex.</text>
</comment>
<comment type="subcellular location">
    <subcellularLocation>
        <location evidence="1">Cell inner membrane</location>
        <topology evidence="1">Multi-pass membrane protein</topology>
    </subcellularLocation>
</comment>
<comment type="similarity">
    <text evidence="1">Belongs to the complex I subunit 3 family.</text>
</comment>
<feature type="chain" id="PRO_0000362707" description="NADH-quinone oxidoreductase subunit A">
    <location>
        <begin position="1"/>
        <end position="122"/>
    </location>
</feature>
<feature type="transmembrane region" description="Helical" evidence="1">
    <location>
        <begin position="12"/>
        <end position="32"/>
    </location>
</feature>
<feature type="transmembrane region" description="Helical" evidence="1">
    <location>
        <begin position="67"/>
        <end position="87"/>
    </location>
</feature>
<feature type="transmembrane region" description="Helical" evidence="1">
    <location>
        <begin position="91"/>
        <end position="111"/>
    </location>
</feature>
<proteinExistence type="inferred from homology"/>
<dbReference type="EC" id="7.1.1.-" evidence="1"/>
<dbReference type="EMBL" id="AL954747">
    <property type="protein sequence ID" value="CAD85688.1"/>
    <property type="molecule type" value="Genomic_DNA"/>
</dbReference>
<dbReference type="SMR" id="Q82TU3"/>
<dbReference type="STRING" id="228410.NE1777"/>
<dbReference type="DNASU" id="1082730"/>
<dbReference type="KEGG" id="neu:NE1777"/>
<dbReference type="eggNOG" id="COG0838">
    <property type="taxonomic scope" value="Bacteria"/>
</dbReference>
<dbReference type="HOGENOM" id="CLU_119549_3_1_4"/>
<dbReference type="PhylomeDB" id="Q82TU3"/>
<dbReference type="Proteomes" id="UP000001416">
    <property type="component" value="Chromosome"/>
</dbReference>
<dbReference type="GO" id="GO:0030964">
    <property type="term" value="C:NADH dehydrogenase complex"/>
    <property type="evidence" value="ECO:0007669"/>
    <property type="project" value="TreeGrafter"/>
</dbReference>
<dbReference type="GO" id="GO:0005886">
    <property type="term" value="C:plasma membrane"/>
    <property type="evidence" value="ECO:0007669"/>
    <property type="project" value="UniProtKB-SubCell"/>
</dbReference>
<dbReference type="GO" id="GO:0008137">
    <property type="term" value="F:NADH dehydrogenase (ubiquinone) activity"/>
    <property type="evidence" value="ECO:0007669"/>
    <property type="project" value="InterPro"/>
</dbReference>
<dbReference type="GO" id="GO:0050136">
    <property type="term" value="F:NADH:ubiquinone reductase (non-electrogenic) activity"/>
    <property type="evidence" value="ECO:0007669"/>
    <property type="project" value="UniProtKB-UniRule"/>
</dbReference>
<dbReference type="GO" id="GO:0048038">
    <property type="term" value="F:quinone binding"/>
    <property type="evidence" value="ECO:0007669"/>
    <property type="project" value="UniProtKB-KW"/>
</dbReference>
<dbReference type="FunFam" id="1.20.58.1610:FF:000004">
    <property type="entry name" value="NADH-quinone oxidoreductase subunit A"/>
    <property type="match status" value="1"/>
</dbReference>
<dbReference type="Gene3D" id="1.20.58.1610">
    <property type="entry name" value="NADH:ubiquinone/plastoquinone oxidoreductase, chain 3"/>
    <property type="match status" value="1"/>
</dbReference>
<dbReference type="HAMAP" id="MF_01394">
    <property type="entry name" value="NDH1_NuoA"/>
    <property type="match status" value="1"/>
</dbReference>
<dbReference type="InterPro" id="IPR023043">
    <property type="entry name" value="NAD(P)H_OxRDtase_bac/plastid"/>
</dbReference>
<dbReference type="InterPro" id="IPR000440">
    <property type="entry name" value="NADH_UbQ/plastoQ_OxRdtase_su3"/>
</dbReference>
<dbReference type="InterPro" id="IPR038430">
    <property type="entry name" value="NDAH_ubi_oxred_su3_sf"/>
</dbReference>
<dbReference type="PANTHER" id="PTHR11058">
    <property type="entry name" value="NADH-UBIQUINONE OXIDOREDUCTASE CHAIN 3"/>
    <property type="match status" value="1"/>
</dbReference>
<dbReference type="PANTHER" id="PTHR11058:SF9">
    <property type="entry name" value="NADH-UBIQUINONE OXIDOREDUCTASE CHAIN 3"/>
    <property type="match status" value="1"/>
</dbReference>
<dbReference type="Pfam" id="PF00507">
    <property type="entry name" value="Oxidored_q4"/>
    <property type="match status" value="1"/>
</dbReference>